<reference key="1">
    <citation type="journal article" date="2006" name="Nature">
        <title>Human chromosome 11 DNA sequence and analysis including novel gene identification.</title>
        <authorList>
            <person name="Taylor T.D."/>
            <person name="Noguchi H."/>
            <person name="Totoki Y."/>
            <person name="Toyoda A."/>
            <person name="Kuroki Y."/>
            <person name="Dewar K."/>
            <person name="Lloyd C."/>
            <person name="Itoh T."/>
            <person name="Takeda T."/>
            <person name="Kim D.-W."/>
            <person name="She X."/>
            <person name="Barlow K.F."/>
            <person name="Bloom T."/>
            <person name="Bruford E."/>
            <person name="Chang J.L."/>
            <person name="Cuomo C.A."/>
            <person name="Eichler E."/>
            <person name="FitzGerald M.G."/>
            <person name="Jaffe D.B."/>
            <person name="LaButti K."/>
            <person name="Nicol R."/>
            <person name="Park H.-S."/>
            <person name="Seaman C."/>
            <person name="Sougnez C."/>
            <person name="Yang X."/>
            <person name="Zimmer A.R."/>
            <person name="Zody M.C."/>
            <person name="Birren B.W."/>
            <person name="Nusbaum C."/>
            <person name="Fujiyama A."/>
            <person name="Hattori M."/>
            <person name="Rogers J."/>
            <person name="Lander E.S."/>
            <person name="Sakaki Y."/>
        </authorList>
    </citation>
    <scope>NUCLEOTIDE SEQUENCE [LARGE SCALE GENOMIC DNA]</scope>
</reference>
<reference key="2">
    <citation type="submission" date="2006-03" db="EMBL/GenBank/DDBJ databases">
        <title>RIKEN full-length enriched human cDNA library.</title>
        <authorList>
            <person name="Arakawa T."/>
            <person name="Carninci P."/>
            <person name="Fukuda S."/>
            <person name="Hasegawa A."/>
            <person name="Hayashida K."/>
            <person name="Hori F."/>
            <person name="Kai C."/>
            <person name="Kawai J."/>
            <person name="Kojima M."/>
            <person name="Murata M."/>
            <person name="Nakamura M."/>
            <person name="Nishiyori H."/>
            <person name="Nomura K."/>
            <person name="Ohno M."/>
            <person name="Sasaki D."/>
            <person name="Shibazaki E."/>
            <person name="Tagami M."/>
            <person name="Tagami Y."/>
            <person name="Hayashizaki Y."/>
        </authorList>
    </citation>
    <scope>NUCLEOTIDE SEQUENCE [LARGE SCALE MRNA] OF 1-101</scope>
    <source>
        <tissue>Testis</tissue>
    </source>
</reference>
<keyword id="KW-1003">Cell membrane</keyword>
<keyword id="KW-0966">Cell projection</keyword>
<keyword id="KW-0969">Cilium</keyword>
<keyword id="KW-0282">Flagellum</keyword>
<keyword id="KW-0472">Membrane</keyword>
<keyword id="KW-1185">Reference proteome</keyword>
<keyword id="KW-0812">Transmembrane</keyword>
<keyword id="KW-1133">Transmembrane helix</keyword>
<comment type="function">
    <text evidence="1">Auxiliary component of the CatSper complex, a complex involved in sperm cell hyperactivation.</text>
</comment>
<comment type="subunit">
    <text evidence="1 2">Component of the CatSper complex or CatSpermasome composed of the core pore-forming members CATSPER1, CATSPER2, CATSPER3 and CATSPER4 as well as auxiliary members CATSPERB, CATSPERG, CATSPERD, CATSPERE, CATSPERZ, C2CD6/CATSPERT, TMEM249, TMEM262 and EFCAB9 (By similarity). HSPA1 may be an additional auxiliary complex member (By similarity). The core complex members CATSPER1, CATSPER2, CATSPER3 and CATSPER4 form a heterotetrameric channel. The auxiliary CATSPERB, CATSPERG, CATSPERD and CATSPERE subunits form a pavilion-like structure over the pore which stabilizes the complex through interactions with CATSPER4, CATSPER3, CATSPER1 and CATSPER2 respectively. TMEM262/CATSPERH interacts with CATSPERB, further stabilizing the complex. C2CD6/CATSPERT interacts at least with CATSPERD and is required for targeting the CatSper complex in the flagellar membrane (By similarity).</text>
</comment>
<comment type="interaction">
    <interactant intactId="EBI-17180389">
        <id>E9PQX1</id>
    </interactant>
    <interactant intactId="EBI-13059134">
        <id>Q13520</id>
        <label>AQP6</label>
    </interactant>
    <organismsDiffer>false</organismsDiffer>
    <experiments>3</experiments>
</comment>
<comment type="interaction">
    <interactant intactId="EBI-17180389">
        <id>E9PQX1</id>
    </interactant>
    <interactant intactId="EBI-3862428">
        <id>P09693</id>
        <label>CD3G</label>
    </interactant>
    <organismsDiffer>false</organismsDiffer>
    <experiments>3</experiments>
</comment>
<comment type="interaction">
    <interactant intactId="EBI-17180389">
        <id>E9PQX1</id>
    </interactant>
    <interactant intactId="EBI-7797864">
        <id>P11912</id>
        <label>CD79A</label>
    </interactant>
    <organismsDiffer>false</organismsDiffer>
    <experiments>3</experiments>
</comment>
<comment type="interaction">
    <interactant intactId="EBI-17180389">
        <id>E9PQX1</id>
    </interactant>
    <interactant intactId="EBI-526033">
        <id>Q9HAV5</id>
        <label>EDA2R</label>
    </interactant>
    <organismsDiffer>false</organismsDiffer>
    <experiments>3</experiments>
</comment>
<comment type="interaction">
    <interactant intactId="EBI-17180389">
        <id>E9PQX1</id>
    </interactant>
    <interactant intactId="EBI-4319440">
        <id>P54849</id>
        <label>EMP1</label>
    </interactant>
    <organismsDiffer>false</organismsDiffer>
    <experiments>3</experiments>
</comment>
<comment type="interaction">
    <interactant intactId="EBI-17180389">
        <id>E9PQX1</id>
    </interactant>
    <interactant intactId="EBI-2833872">
        <id>O15552</id>
        <label>FFAR2</label>
    </interactant>
    <organismsDiffer>false</organismsDiffer>
    <experiments>3</experiments>
</comment>
<comment type="interaction">
    <interactant intactId="EBI-17180389">
        <id>E9PQX1</id>
    </interactant>
    <interactant intactId="EBI-18076404">
        <id>O15529</id>
        <label>GPR42</label>
    </interactant>
    <organismsDiffer>false</organismsDiffer>
    <experiments>3</experiments>
</comment>
<comment type="interaction">
    <interactant intactId="EBI-17180389">
        <id>E9PQX1</id>
    </interactant>
    <interactant intactId="EBI-9018187">
        <id>P26715</id>
        <label>KLRC1</label>
    </interactant>
    <organismsDiffer>false</organismsDiffer>
    <experiments>3</experiments>
</comment>
<comment type="interaction">
    <interactant intactId="EBI-17180389">
        <id>E9PQX1</id>
    </interactant>
    <interactant intactId="EBI-3867271">
        <id>Q9NQG1</id>
        <label>MANBAL</label>
    </interactant>
    <organismsDiffer>false</organismsDiffer>
    <experiments>3</experiments>
</comment>
<comment type="interaction">
    <interactant intactId="EBI-17180389">
        <id>E9PQX1</id>
    </interactant>
    <interactant intactId="EBI-18037857">
        <id>Q3SXP7</id>
        <label>SHISAL1</label>
    </interactant>
    <organismsDiffer>false</organismsDiffer>
    <experiments>3</experiments>
</comment>
<comment type="interaction">
    <interactant intactId="EBI-17180389">
        <id>E9PQX1</id>
    </interactant>
    <interactant intactId="EBI-18159983">
        <id>Q3KNW5</id>
        <label>SLC10A6</label>
    </interactant>
    <organismsDiffer>false</organismsDiffer>
    <experiments>3</experiments>
</comment>
<comment type="interaction">
    <interactant intactId="EBI-17180389">
        <id>E9PQX1</id>
    </interactant>
    <interactant intactId="EBI-12237619">
        <id>O75841</id>
        <label>UPK1B</label>
    </interactant>
    <organismsDiffer>false</organismsDiffer>
    <experiments>3</experiments>
</comment>
<comment type="subcellular location">
    <subcellularLocation>
        <location evidence="3">Cell projection</location>
        <location evidence="3">Cilium</location>
        <location evidence="3">Flagellum membrane</location>
        <topology evidence="1">Multi-pass membrane protein</topology>
    </subcellularLocation>
</comment>
<comment type="caution">
    <text evidence="3">In mouse, Slco6c1 is an additional auxiliary subunit of the CatSper complex. It is unclear if the related SLCO6A1 protein performs the same role in non-rodent species.</text>
</comment>
<gene>
    <name evidence="4" type="primary">TMEM262</name>
    <name evidence="1" type="synonym">CATSPERH</name>
</gene>
<name>TM262_HUMAN</name>
<sequence length="116" mass="13758">MWLQDRIATFFFPKGMMLTTAALMLFFLHLGIFIRDVHNFCITYHYDHMSFHYTVVLMFSQVISICWAAMGSLYAEMTENKYVCFSALTILMLNGAMFFNRLSLEFLAIEYREEHH</sequence>
<feature type="chain" id="PRO_0000424961" description="Cation channel sperm-associated auxiliary subunit TMEM262">
    <location>
        <begin position="1"/>
        <end position="116"/>
    </location>
</feature>
<feature type="topological domain" description="Cytoplasmic" evidence="1">
    <location>
        <begin position="1"/>
        <end position="16"/>
    </location>
</feature>
<feature type="transmembrane region" description="Helical" evidence="1">
    <location>
        <begin position="17"/>
        <end position="38"/>
    </location>
</feature>
<feature type="topological domain" description="Extracellular" evidence="1">
    <location>
        <begin position="39"/>
        <end position="51"/>
    </location>
</feature>
<feature type="transmembrane region" description="Helical" evidence="1">
    <location>
        <begin position="52"/>
        <end position="72"/>
    </location>
</feature>
<feature type="topological domain" description="Cytoplasmic" evidence="1">
    <location>
        <begin position="73"/>
        <end position="84"/>
    </location>
</feature>
<feature type="transmembrane region" description="Helical" evidence="1">
    <location>
        <begin position="85"/>
        <end position="107"/>
    </location>
</feature>
<feature type="topological domain" description="Extracellular" evidence="1">
    <location>
        <begin position="108"/>
        <end position="116"/>
    </location>
</feature>
<feature type="sequence conflict" description="In Ref. 2; HY032040." evidence="3" ref="2">
    <original>W</original>
    <variation>R</variation>
    <location>
        <position position="2"/>
    </location>
</feature>
<accession>E9PQX1</accession>
<proteinExistence type="evidence at protein level"/>
<protein>
    <recommendedName>
        <fullName evidence="3">Cation channel sperm-associated auxiliary subunit TMEM262</fullName>
    </recommendedName>
    <alternativeName>
        <fullName evidence="1">Cation channel sperm-associated auxiliary subunit eta</fullName>
    </alternativeName>
    <alternativeName>
        <fullName evidence="4">Transmembrane protein 262</fullName>
    </alternativeName>
</protein>
<evidence type="ECO:0000250" key="1">
    <source>
        <dbReference type="UniProtKB" id="D3Z338"/>
    </source>
</evidence>
<evidence type="ECO:0000250" key="2">
    <source>
        <dbReference type="UniProtKB" id="Q91ZR5"/>
    </source>
</evidence>
<evidence type="ECO:0000305" key="3"/>
<evidence type="ECO:0000312" key="4">
    <source>
        <dbReference type="HGNC" id="HGNC:49389"/>
    </source>
</evidence>
<dbReference type="EMBL" id="AP003068">
    <property type="status" value="NOT_ANNOTATED_CDS"/>
    <property type="molecule type" value="Genomic_DNA"/>
</dbReference>
<dbReference type="EMBL" id="HY032040">
    <property type="status" value="NOT_ANNOTATED_CDS"/>
    <property type="molecule type" value="mRNA"/>
</dbReference>
<dbReference type="CCDS" id="CCDS60845.1"/>
<dbReference type="RefSeq" id="NP_001269377.1">
    <property type="nucleotide sequence ID" value="NM_001282448.2"/>
</dbReference>
<dbReference type="SMR" id="E9PQX1"/>
<dbReference type="BioGRID" id="934641">
    <property type="interactions" value="14"/>
</dbReference>
<dbReference type="ComplexPortal" id="CPX-9165">
    <property type="entry name" value="CatSpermasome complex"/>
</dbReference>
<dbReference type="FunCoup" id="E9PQX1">
    <property type="interactions" value="6"/>
</dbReference>
<dbReference type="IntAct" id="E9PQX1">
    <property type="interactions" value="12"/>
</dbReference>
<dbReference type="STRING" id="9606.ENSP00000432459"/>
<dbReference type="BioMuta" id="TMEM262"/>
<dbReference type="MassIVE" id="E9PQX1"/>
<dbReference type="PaxDb" id="9606-ENSP00000432459"/>
<dbReference type="DNASU" id="100130348"/>
<dbReference type="Ensembl" id="ENST00000530719.6">
    <property type="protein sequence ID" value="ENSP00000432459.1"/>
    <property type="gene ID" value="ENSG00000187066.9"/>
</dbReference>
<dbReference type="GeneID" id="100130348"/>
<dbReference type="KEGG" id="hsa:100130348"/>
<dbReference type="MANE-Select" id="ENST00000530719.6">
    <property type="protein sequence ID" value="ENSP00000432459.1"/>
    <property type="RefSeq nucleotide sequence ID" value="NM_001282448.2"/>
    <property type="RefSeq protein sequence ID" value="NP_001269377.1"/>
</dbReference>
<dbReference type="UCSC" id="uc031xrs.2">
    <property type="organism name" value="human"/>
</dbReference>
<dbReference type="AGR" id="HGNC:49389"/>
<dbReference type="CTD" id="100130348"/>
<dbReference type="DisGeNET" id="100130348"/>
<dbReference type="GeneCards" id="TMEM262"/>
<dbReference type="HGNC" id="HGNC:49389">
    <property type="gene designation" value="TMEM262"/>
</dbReference>
<dbReference type="HPA" id="ENSG00000187066">
    <property type="expression patterns" value="Tissue enriched (testis)"/>
</dbReference>
<dbReference type="neXtProt" id="NX_E9PQX1"/>
<dbReference type="OpenTargets" id="ENSG00000187066"/>
<dbReference type="VEuPathDB" id="HostDB:ENSG00000187066"/>
<dbReference type="eggNOG" id="ENOG502S7IB">
    <property type="taxonomic scope" value="Eukaryota"/>
</dbReference>
<dbReference type="GeneTree" id="ENSGT00530000064783"/>
<dbReference type="HOGENOM" id="CLU_160801_0_0_1"/>
<dbReference type="InParanoid" id="E9PQX1"/>
<dbReference type="OMA" id="QYREENH"/>
<dbReference type="OrthoDB" id="9406895at2759"/>
<dbReference type="PAN-GO" id="E9PQX1">
    <property type="GO annotations" value="0 GO annotations based on evolutionary models"/>
</dbReference>
<dbReference type="PhylomeDB" id="E9PQX1"/>
<dbReference type="PathwayCommons" id="E9PQX1"/>
<dbReference type="SignaLink" id="E9PQX1"/>
<dbReference type="BioGRID-ORCS" id="100130348">
    <property type="hits" value="8 hits in 1021 CRISPR screens"/>
</dbReference>
<dbReference type="ChiTaRS" id="TMEM262">
    <property type="organism name" value="human"/>
</dbReference>
<dbReference type="GenomeRNAi" id="100130348"/>
<dbReference type="Pharos" id="E9PQX1">
    <property type="development level" value="Tdark"/>
</dbReference>
<dbReference type="PRO" id="PR:E9PQX1"/>
<dbReference type="Proteomes" id="UP000005640">
    <property type="component" value="Chromosome 11"/>
</dbReference>
<dbReference type="RNAct" id="E9PQX1">
    <property type="molecule type" value="protein"/>
</dbReference>
<dbReference type="Bgee" id="ENSG00000187066">
    <property type="expression patterns" value="Expressed in endometrium epithelium and 139 other cell types or tissues"/>
</dbReference>
<dbReference type="ExpressionAtlas" id="E9PQX1">
    <property type="expression patterns" value="baseline and differential"/>
</dbReference>
<dbReference type="GO" id="GO:0036128">
    <property type="term" value="C:CatSper complex"/>
    <property type="evidence" value="ECO:0000250"/>
    <property type="project" value="UniProtKB"/>
</dbReference>
<dbReference type="GO" id="GO:0031514">
    <property type="term" value="C:motile cilium"/>
    <property type="evidence" value="ECO:0007669"/>
    <property type="project" value="UniProtKB-KW"/>
</dbReference>
<dbReference type="InterPro" id="IPR040431">
    <property type="entry name" value="TM262"/>
</dbReference>
<dbReference type="PANTHER" id="PTHR37998:SF1">
    <property type="entry name" value="CATION CHANNEL SPERM-ASSOCIATED AUXILIARY SUBUNIT TMEM262"/>
    <property type="match status" value="1"/>
</dbReference>
<dbReference type="PANTHER" id="PTHR37998">
    <property type="entry name" value="TRANSMEMBRANE PROTEIN 262"/>
    <property type="match status" value="1"/>
</dbReference>
<organism>
    <name type="scientific">Homo sapiens</name>
    <name type="common">Human</name>
    <dbReference type="NCBI Taxonomy" id="9606"/>
    <lineage>
        <taxon>Eukaryota</taxon>
        <taxon>Metazoa</taxon>
        <taxon>Chordata</taxon>
        <taxon>Craniata</taxon>
        <taxon>Vertebrata</taxon>
        <taxon>Euteleostomi</taxon>
        <taxon>Mammalia</taxon>
        <taxon>Eutheria</taxon>
        <taxon>Euarchontoglires</taxon>
        <taxon>Primates</taxon>
        <taxon>Haplorrhini</taxon>
        <taxon>Catarrhini</taxon>
        <taxon>Hominidae</taxon>
        <taxon>Homo</taxon>
    </lineage>
</organism>